<sequence length="548" mass="62259">MGKPKKKSDLSRAELMMMTIADVIKQLVEAHEEGKDINLNKVKTKTSAKYGLSAQPRLVDIIAAVPPHYRRALVPKLKAKPIRTASGIAVVAVMCKPHRCPHISFTGNICVYCPGGPDSDFEYSTQSYTGYEPTSMRAIRARYDPYLQTRHRVEQLKQLGHSVDKVEFIVMGGTFMALPEEYRDYFIRNLHDALSGHTSNNVTEAVRYSERSNTKCVGITIETRPDYCLKRHLSDMLGYGCTRLEIGVQSVYEDVARDTNRGHTVRAVCESFHLAKDAGFKVVAHMMPDLPNVGMERDVEQFIEFFENPAFRPDGLKLYPTLVIRGTGLYELWKTGRYKSYSPSALVDLVARILALVPPWTRVYRVQRDIPMPLVSSGVEHGNLRELALARMKDMGTECRDVRTREVGIQEIHHKVRPYQVELIRRDYVANGGWETFLSYEDPEQDILIGLLRLRRCSPQSFRPELKGGVSIVRELHVYGSVVPVSSRDPSKFQHQGFGMMLMEEAERIARDEHGSSKLAVISGVGTRNYYRKMGYELEGPYMVKNLY</sequence>
<accession>Q5RIC0</accession>
<accession>Q4V9M7</accession>
<accession>Q58ER7</accession>
<dbReference type="EC" id="2.3.1.311" evidence="2"/>
<dbReference type="EMBL" id="BX279523">
    <property type="protein sequence ID" value="CAI12039.1"/>
    <property type="status" value="ALT_SEQ"/>
    <property type="molecule type" value="Genomic_DNA"/>
</dbReference>
<dbReference type="EMBL" id="BC091787">
    <property type="protein sequence ID" value="AAH91787.1"/>
    <property type="molecule type" value="mRNA"/>
</dbReference>
<dbReference type="EMBL" id="BC096810">
    <property type="protein sequence ID" value="AAH96810.1"/>
    <property type="molecule type" value="mRNA"/>
</dbReference>
<dbReference type="RefSeq" id="NP_001014344.2">
    <molecule id="Q5RIC0-1"/>
    <property type="nucleotide sequence ID" value="NM_001014322.2"/>
</dbReference>
<dbReference type="SMR" id="Q5RIC0"/>
<dbReference type="FunCoup" id="Q5RIC0">
    <property type="interactions" value="2403"/>
</dbReference>
<dbReference type="STRING" id="7955.ENSDARP00000113240"/>
<dbReference type="PaxDb" id="7955-ENSDARP00000113240"/>
<dbReference type="GeneID" id="541509"/>
<dbReference type="KEGG" id="dre:541509"/>
<dbReference type="AGR" id="ZFIN:ZDB-GENE-050327-35"/>
<dbReference type="CTD" id="55140"/>
<dbReference type="ZFIN" id="ZDB-GENE-050327-35">
    <property type="gene designation" value="elp3"/>
</dbReference>
<dbReference type="eggNOG" id="KOG2535">
    <property type="taxonomic scope" value="Eukaryota"/>
</dbReference>
<dbReference type="HOGENOM" id="CLU_025983_2_1_1"/>
<dbReference type="InParanoid" id="Q5RIC0"/>
<dbReference type="OMA" id="TFETRPD"/>
<dbReference type="OrthoDB" id="10265243at2759"/>
<dbReference type="PhylomeDB" id="Q5RIC0"/>
<dbReference type="TreeFam" id="TF105752"/>
<dbReference type="UniPathway" id="UPA00988"/>
<dbReference type="PRO" id="PR:Q5RIC0"/>
<dbReference type="Proteomes" id="UP000000437">
    <property type="component" value="Chromosome 20"/>
</dbReference>
<dbReference type="Bgee" id="ENSDARG00000042005">
    <property type="expression patterns" value="Expressed in mature ovarian follicle and 20 other cell types or tissues"/>
</dbReference>
<dbReference type="GO" id="GO:0005737">
    <property type="term" value="C:cytoplasm"/>
    <property type="evidence" value="ECO:0000250"/>
    <property type="project" value="UniProtKB"/>
</dbReference>
<dbReference type="GO" id="GO:0033588">
    <property type="term" value="C:elongator holoenzyme complex"/>
    <property type="evidence" value="ECO:0000318"/>
    <property type="project" value="GO_Central"/>
</dbReference>
<dbReference type="GO" id="GO:0005634">
    <property type="term" value="C:nucleus"/>
    <property type="evidence" value="ECO:0000318"/>
    <property type="project" value="GO_Central"/>
</dbReference>
<dbReference type="GO" id="GO:0051539">
    <property type="term" value="F:4 iron, 4 sulfur cluster binding"/>
    <property type="evidence" value="ECO:0007669"/>
    <property type="project" value="UniProtKB-KW"/>
</dbReference>
<dbReference type="GO" id="GO:0046872">
    <property type="term" value="F:metal ion binding"/>
    <property type="evidence" value="ECO:0007669"/>
    <property type="project" value="UniProtKB-KW"/>
</dbReference>
<dbReference type="GO" id="GO:0008607">
    <property type="term" value="F:phosphorylase kinase regulator activity"/>
    <property type="evidence" value="ECO:0000250"/>
    <property type="project" value="UniProtKB"/>
</dbReference>
<dbReference type="GO" id="GO:0000049">
    <property type="term" value="F:tRNA binding"/>
    <property type="evidence" value="ECO:0007669"/>
    <property type="project" value="UniProtKB-KW"/>
</dbReference>
<dbReference type="GO" id="GO:0106261">
    <property type="term" value="F:tRNA uridine(34) acetyltransferase activity"/>
    <property type="evidence" value="ECO:0000250"/>
    <property type="project" value="UniProtKB"/>
</dbReference>
<dbReference type="GO" id="GO:0007409">
    <property type="term" value="P:axonogenesis"/>
    <property type="evidence" value="ECO:0000315"/>
    <property type="project" value="ZFIN"/>
</dbReference>
<dbReference type="GO" id="GO:0006357">
    <property type="term" value="P:regulation of transcription by RNA polymerase II"/>
    <property type="evidence" value="ECO:0000250"/>
    <property type="project" value="UniProtKB"/>
</dbReference>
<dbReference type="GO" id="GO:0061053">
    <property type="term" value="P:somite development"/>
    <property type="evidence" value="ECO:0000315"/>
    <property type="project" value="ZFIN"/>
</dbReference>
<dbReference type="GO" id="GO:0002926">
    <property type="term" value="P:tRNA wobble base 5-methoxycarbonylmethyl-2-thiouridinylation"/>
    <property type="evidence" value="ECO:0000318"/>
    <property type="project" value="GO_Central"/>
</dbReference>
<dbReference type="GO" id="GO:0002098">
    <property type="term" value="P:tRNA wobble uridine modification"/>
    <property type="evidence" value="ECO:0000250"/>
    <property type="project" value="UniProtKB"/>
</dbReference>
<dbReference type="CDD" id="cd01335">
    <property type="entry name" value="Radical_SAM"/>
    <property type="match status" value="1"/>
</dbReference>
<dbReference type="FunFam" id="3.40.630.30:FF:000003">
    <property type="entry name" value="Elongator complex protein 3"/>
    <property type="match status" value="1"/>
</dbReference>
<dbReference type="Gene3D" id="3.40.630.30">
    <property type="match status" value="1"/>
</dbReference>
<dbReference type="InterPro" id="IPR016181">
    <property type="entry name" value="Acyl_CoA_acyltransferase"/>
</dbReference>
<dbReference type="InterPro" id="IPR039661">
    <property type="entry name" value="ELP3"/>
</dbReference>
<dbReference type="InterPro" id="IPR034687">
    <property type="entry name" value="ELP3-like"/>
</dbReference>
<dbReference type="InterPro" id="IPR056591">
    <property type="entry name" value="ELP3-like_N"/>
</dbReference>
<dbReference type="InterPro" id="IPR006638">
    <property type="entry name" value="Elp3/MiaA/NifB-like_rSAM"/>
</dbReference>
<dbReference type="InterPro" id="IPR000182">
    <property type="entry name" value="GNAT_dom"/>
</dbReference>
<dbReference type="InterPro" id="IPR032432">
    <property type="entry name" value="Radical_SAM_C"/>
</dbReference>
<dbReference type="InterPro" id="IPR007197">
    <property type="entry name" value="rSAM"/>
</dbReference>
<dbReference type="NCBIfam" id="TIGR01211">
    <property type="entry name" value="ELP3"/>
    <property type="match status" value="1"/>
</dbReference>
<dbReference type="PANTHER" id="PTHR11135:SF0">
    <property type="entry name" value="ELONGATOR COMPLEX PROTEIN 3"/>
    <property type="match status" value="1"/>
</dbReference>
<dbReference type="PANTHER" id="PTHR11135">
    <property type="entry name" value="HISTONE ACETYLTRANSFERASE-RELATED"/>
    <property type="match status" value="1"/>
</dbReference>
<dbReference type="Pfam" id="PF23613">
    <property type="entry name" value="ELP3_N"/>
    <property type="match status" value="1"/>
</dbReference>
<dbReference type="Pfam" id="PF04055">
    <property type="entry name" value="Radical_SAM"/>
    <property type="match status" value="1"/>
</dbReference>
<dbReference type="Pfam" id="PF16199">
    <property type="entry name" value="Radical_SAM_C"/>
    <property type="match status" value="1"/>
</dbReference>
<dbReference type="PIRSF" id="PIRSF005669">
    <property type="entry name" value="Hist_AcTrfase_ELP3"/>
    <property type="match status" value="1"/>
</dbReference>
<dbReference type="SFLD" id="SFLDG01086">
    <property type="entry name" value="elongater_protein-like"/>
    <property type="match status" value="1"/>
</dbReference>
<dbReference type="SFLD" id="SFLDF00344">
    <property type="entry name" value="ELP3-like"/>
    <property type="match status" value="1"/>
</dbReference>
<dbReference type="SMART" id="SM00729">
    <property type="entry name" value="Elp3"/>
    <property type="match status" value="1"/>
</dbReference>
<dbReference type="SUPFAM" id="SSF55729">
    <property type="entry name" value="Acyl-CoA N-acyltransferases (Nat)"/>
    <property type="match status" value="1"/>
</dbReference>
<dbReference type="SUPFAM" id="SSF102114">
    <property type="entry name" value="Radical SAM enzymes"/>
    <property type="match status" value="1"/>
</dbReference>
<dbReference type="PROSITE" id="PS51186">
    <property type="entry name" value="GNAT"/>
    <property type="match status" value="1"/>
</dbReference>
<dbReference type="PROSITE" id="PS51918">
    <property type="entry name" value="RADICAL_SAM"/>
    <property type="match status" value="1"/>
</dbReference>
<gene>
    <name evidence="4" type="primary">elp3</name>
    <name type="ORF">si:ch211-63o20.8</name>
    <name type="ORF">zgc:113140</name>
</gene>
<protein>
    <recommendedName>
        <fullName evidence="4">Elongator complex protein 3</fullName>
        <ecNumber evidence="2">2.3.1.311</ecNumber>
    </recommendedName>
    <alternativeName>
        <fullName evidence="10">tRNA uridine(34) acetyltransferase</fullName>
    </alternativeName>
</protein>
<feature type="chain" id="PRO_0000283989" description="Elongator complex protein 3">
    <location>
        <begin position="1"/>
        <end position="548"/>
    </location>
</feature>
<feature type="domain" description="Radical SAM core" evidence="6">
    <location>
        <begin position="83"/>
        <end position="373"/>
    </location>
</feature>
<feature type="domain" description="N-acetyltransferase" evidence="5">
    <location>
        <begin position="397"/>
        <end position="548"/>
    </location>
</feature>
<feature type="binding site" evidence="3">
    <location>
        <position position="100"/>
    </location>
    <ligand>
        <name>[4Fe-4S] cluster</name>
        <dbReference type="ChEBI" id="CHEBI:49883"/>
        <note>4Fe-4S-S-AdoMet</note>
    </ligand>
</feature>
<feature type="binding site" evidence="3">
    <location>
        <position position="110"/>
    </location>
    <ligand>
        <name>[4Fe-4S] cluster</name>
        <dbReference type="ChEBI" id="CHEBI:49883"/>
        <note>4Fe-4S-S-AdoMet</note>
    </ligand>
</feature>
<feature type="binding site" evidence="3">
    <location>
        <position position="113"/>
    </location>
    <ligand>
        <name>[4Fe-4S] cluster</name>
        <dbReference type="ChEBI" id="CHEBI:49883"/>
        <note>4Fe-4S-S-AdoMet</note>
    </ligand>
</feature>
<feature type="binding site" evidence="1">
    <location>
        <position position="165"/>
    </location>
    <ligand>
        <name>acetyl-CoA</name>
        <dbReference type="ChEBI" id="CHEBI:57288"/>
    </ligand>
</feature>
<feature type="binding site" evidence="1">
    <location>
        <begin position="475"/>
        <end position="478"/>
    </location>
    <ligand>
        <name>acetyl-CoA</name>
        <dbReference type="ChEBI" id="CHEBI:57288"/>
    </ligand>
</feature>
<feature type="binding site" evidence="1">
    <location>
        <begin position="498"/>
        <end position="500"/>
    </location>
    <ligand>
        <name>acetyl-CoA</name>
        <dbReference type="ChEBI" id="CHEBI:57288"/>
    </ligand>
</feature>
<feature type="binding site" evidence="1">
    <location>
        <position position="531"/>
    </location>
    <ligand>
        <name>acetyl-CoA</name>
        <dbReference type="ChEBI" id="CHEBI:57288"/>
    </ligand>
</feature>
<feature type="splice variant" id="VSP_026085" description="In isoform 3." evidence="9">
    <location>
        <begin position="1"/>
        <end position="93"/>
    </location>
</feature>
<feature type="splice variant" id="VSP_026084" description="In isoform 2." evidence="10">
    <location>
        <begin position="1"/>
        <end position="15"/>
    </location>
</feature>
<feature type="sequence conflict" description="In Ref. 2; AAH91787." evidence="10" ref="2">
    <original>H</original>
    <variation>Y</variation>
    <location>
        <position position="263"/>
    </location>
</feature>
<name>ELP3_DANRE</name>
<organism>
    <name type="scientific">Danio rerio</name>
    <name type="common">Zebrafish</name>
    <name type="synonym">Brachydanio rerio</name>
    <dbReference type="NCBI Taxonomy" id="7955"/>
    <lineage>
        <taxon>Eukaryota</taxon>
        <taxon>Metazoa</taxon>
        <taxon>Chordata</taxon>
        <taxon>Craniata</taxon>
        <taxon>Vertebrata</taxon>
        <taxon>Euteleostomi</taxon>
        <taxon>Actinopterygii</taxon>
        <taxon>Neopterygii</taxon>
        <taxon>Teleostei</taxon>
        <taxon>Ostariophysi</taxon>
        <taxon>Cypriniformes</taxon>
        <taxon>Danionidae</taxon>
        <taxon>Danioninae</taxon>
        <taxon>Danio</taxon>
    </lineage>
</organism>
<keyword id="KW-0004">4Fe-4S</keyword>
<keyword id="KW-0012">Acyltransferase</keyword>
<keyword id="KW-0025">Alternative splicing</keyword>
<keyword id="KW-0963">Cytoplasm</keyword>
<keyword id="KW-0408">Iron</keyword>
<keyword id="KW-0411">Iron-sulfur</keyword>
<keyword id="KW-0479">Metal-binding</keyword>
<keyword id="KW-0524">Neurogenesis</keyword>
<keyword id="KW-0539">Nucleus</keyword>
<keyword id="KW-1185">Reference proteome</keyword>
<keyword id="KW-0694">RNA-binding</keyword>
<keyword id="KW-0949">S-adenosyl-L-methionine</keyword>
<keyword id="KW-0808">Transferase</keyword>
<keyword id="KW-0819">tRNA processing</keyword>
<keyword id="KW-0820">tRNA-binding</keyword>
<evidence type="ECO:0000250" key="1">
    <source>
        <dbReference type="UniProtKB" id="A0A1C7D1B7"/>
    </source>
</evidence>
<evidence type="ECO:0000250" key="2">
    <source>
        <dbReference type="UniProtKB" id="D5VRB9"/>
    </source>
</evidence>
<evidence type="ECO:0000250" key="3">
    <source>
        <dbReference type="UniProtKB" id="Q02908"/>
    </source>
</evidence>
<evidence type="ECO:0000250" key="4">
    <source>
        <dbReference type="UniProtKB" id="Q9H9T3"/>
    </source>
</evidence>
<evidence type="ECO:0000255" key="5">
    <source>
        <dbReference type="PROSITE-ProRule" id="PRU00532"/>
    </source>
</evidence>
<evidence type="ECO:0000255" key="6">
    <source>
        <dbReference type="PROSITE-ProRule" id="PRU01266"/>
    </source>
</evidence>
<evidence type="ECO:0000269" key="7">
    <source>
    </source>
</evidence>
<evidence type="ECO:0000269" key="8">
    <source>
    </source>
</evidence>
<evidence type="ECO:0000303" key="9">
    <source ref="2"/>
</evidence>
<evidence type="ECO:0000305" key="10"/>
<proteinExistence type="evidence at transcript level"/>
<comment type="function">
    <text evidence="2 4 7 8">Catalytic tRNA acetyltransferase subunit of the elongator complex which is required for multiple tRNA modifications, including mcm5U (5-methoxycarbonylmethyl uridine), mcm5s2U (5-methoxycarbonylmethyl-2-thiouridine), and ncm5U (5-carbamoylmethyl uridine) (By similarity). In the elongator complex, acts as a tRNA uridine(34) acetyltransferase by mediating formation of carboxymethyluridine in the wobble base at position 34 in tRNAs (By similarity). Involved in neurogenesis (PubMed:18996918). Involved in somite development (PubMed:32023806).</text>
</comment>
<comment type="catalytic activity">
    <reaction evidence="2">
        <text>uridine(34) in tRNA + acetyl-CoA + S-adenosyl-L-methionine + H2O = 5-(carboxymethyl)uridine(34) in tRNA + 5'-deoxyadenosine + L-methionine + CoA + 2 H(+)</text>
        <dbReference type="Rhea" id="RHEA:61020"/>
        <dbReference type="Rhea" id="RHEA-COMP:10407"/>
        <dbReference type="Rhea" id="RHEA-COMP:11727"/>
        <dbReference type="ChEBI" id="CHEBI:15377"/>
        <dbReference type="ChEBI" id="CHEBI:15378"/>
        <dbReference type="ChEBI" id="CHEBI:17319"/>
        <dbReference type="ChEBI" id="CHEBI:57287"/>
        <dbReference type="ChEBI" id="CHEBI:57288"/>
        <dbReference type="ChEBI" id="CHEBI:57844"/>
        <dbReference type="ChEBI" id="CHEBI:59789"/>
        <dbReference type="ChEBI" id="CHEBI:65315"/>
        <dbReference type="ChEBI" id="CHEBI:74882"/>
        <dbReference type="EC" id="2.3.1.311"/>
    </reaction>
    <physiologicalReaction direction="left-to-right" evidence="2">
        <dbReference type="Rhea" id="RHEA:61021"/>
    </physiologicalReaction>
</comment>
<comment type="cofactor">
    <cofactor evidence="3">
        <name>[4Fe-4S] cluster</name>
        <dbReference type="ChEBI" id="CHEBI:49883"/>
    </cofactor>
    <text evidence="3">Binds 1 [4Fe-4S] cluster. The cluster is coordinated with 3 cysteines and an exchangeable S-adenosyl-L-methionine.</text>
</comment>
<comment type="pathway">
    <text evidence="4">tRNA modification; 5-methoxycarbonylmethyl-2-thiouridine-tRNA biosynthesis.</text>
</comment>
<comment type="subunit">
    <text evidence="4">Component of the elongator complex.</text>
</comment>
<comment type="subcellular location">
    <subcellularLocation>
        <location evidence="4">Cytoplasm</location>
    </subcellularLocation>
    <subcellularLocation>
        <location evidence="4">Nucleus</location>
    </subcellularLocation>
</comment>
<comment type="alternative products">
    <event type="alternative splicing"/>
    <isoform>
        <id>Q5RIC0-1</id>
        <name>1</name>
        <sequence type="displayed"/>
    </isoform>
    <isoform>
        <id>Q5RIC0-2</id>
        <name>2</name>
        <sequence type="described" ref="VSP_026084"/>
    </isoform>
    <isoform>
        <id>Q5RIC0-3</id>
        <name>3</name>
        <sequence type="described" ref="VSP_026085"/>
    </isoform>
</comment>
<comment type="disruption phenotype">
    <text evidence="7 8">Morpholino knockdown in embryos results in reduced tRNA modification with decreased levels of mcm5s2U (5-methoxycarbonylmethyl-2-thiouridine) (PubMed:32023806). Morphant larvae display a ventrally curved body where somites present a distortion of their typical chevron shape, being rounded with a different angle compared to controls (PubMed:32023806). Morphants also show disruption of the horizontal myoseptum, diminished somite area, disorganised muscle fibers, a small neural tube and reduced Shh signaling activity (PubMed:32023806). One study has shown that morpholino knockdown in embryos at 27 hpf results in abnormal motor neuron axonal branching and length (PubMed:18996918). However, another study observed shortening in only 5% of motor neurons at 27 hpf and normal length by 48 hpf (PubMed:32023806).</text>
</comment>
<comment type="similarity">
    <text evidence="10">Belongs to the ELP3 family.</text>
</comment>
<comment type="caution">
    <text evidence="4">The elongator complex was originally thought to play a role in transcription elongation. However, it is no longer thought to play a direct role in this process and its primary function is thought to be in tRNA modification.</text>
</comment>
<comment type="sequence caution" evidence="10">
    <conflict type="erroneous gene model prediction">
        <sequence resource="EMBL-CDS" id="CAI12039"/>
    </conflict>
</comment>
<reference key="1">
    <citation type="journal article" date="2013" name="Nature">
        <title>The zebrafish reference genome sequence and its relationship to the human genome.</title>
        <authorList>
            <person name="Howe K."/>
            <person name="Clark M.D."/>
            <person name="Torroja C.F."/>
            <person name="Torrance J."/>
            <person name="Berthelot C."/>
            <person name="Muffato M."/>
            <person name="Collins J.E."/>
            <person name="Humphray S."/>
            <person name="McLaren K."/>
            <person name="Matthews L."/>
            <person name="McLaren S."/>
            <person name="Sealy I."/>
            <person name="Caccamo M."/>
            <person name="Churcher C."/>
            <person name="Scott C."/>
            <person name="Barrett J.C."/>
            <person name="Koch R."/>
            <person name="Rauch G.J."/>
            <person name="White S."/>
            <person name="Chow W."/>
            <person name="Kilian B."/>
            <person name="Quintais L.T."/>
            <person name="Guerra-Assuncao J.A."/>
            <person name="Zhou Y."/>
            <person name="Gu Y."/>
            <person name="Yen J."/>
            <person name="Vogel J.H."/>
            <person name="Eyre T."/>
            <person name="Redmond S."/>
            <person name="Banerjee R."/>
            <person name="Chi J."/>
            <person name="Fu B."/>
            <person name="Langley E."/>
            <person name="Maguire S.F."/>
            <person name="Laird G.K."/>
            <person name="Lloyd D."/>
            <person name="Kenyon E."/>
            <person name="Donaldson S."/>
            <person name="Sehra H."/>
            <person name="Almeida-King J."/>
            <person name="Loveland J."/>
            <person name="Trevanion S."/>
            <person name="Jones M."/>
            <person name="Quail M."/>
            <person name="Willey D."/>
            <person name="Hunt A."/>
            <person name="Burton J."/>
            <person name="Sims S."/>
            <person name="McLay K."/>
            <person name="Plumb B."/>
            <person name="Davis J."/>
            <person name="Clee C."/>
            <person name="Oliver K."/>
            <person name="Clark R."/>
            <person name="Riddle C."/>
            <person name="Elliot D."/>
            <person name="Threadgold G."/>
            <person name="Harden G."/>
            <person name="Ware D."/>
            <person name="Begum S."/>
            <person name="Mortimore B."/>
            <person name="Kerry G."/>
            <person name="Heath P."/>
            <person name="Phillimore B."/>
            <person name="Tracey A."/>
            <person name="Corby N."/>
            <person name="Dunn M."/>
            <person name="Johnson C."/>
            <person name="Wood J."/>
            <person name="Clark S."/>
            <person name="Pelan S."/>
            <person name="Griffiths G."/>
            <person name="Smith M."/>
            <person name="Glithero R."/>
            <person name="Howden P."/>
            <person name="Barker N."/>
            <person name="Lloyd C."/>
            <person name="Stevens C."/>
            <person name="Harley J."/>
            <person name="Holt K."/>
            <person name="Panagiotidis G."/>
            <person name="Lovell J."/>
            <person name="Beasley H."/>
            <person name="Henderson C."/>
            <person name="Gordon D."/>
            <person name="Auger K."/>
            <person name="Wright D."/>
            <person name="Collins J."/>
            <person name="Raisen C."/>
            <person name="Dyer L."/>
            <person name="Leung K."/>
            <person name="Robertson L."/>
            <person name="Ambridge K."/>
            <person name="Leongamornlert D."/>
            <person name="McGuire S."/>
            <person name="Gilderthorp R."/>
            <person name="Griffiths C."/>
            <person name="Manthravadi D."/>
            <person name="Nichol S."/>
            <person name="Barker G."/>
            <person name="Whitehead S."/>
            <person name="Kay M."/>
            <person name="Brown J."/>
            <person name="Murnane C."/>
            <person name="Gray E."/>
            <person name="Humphries M."/>
            <person name="Sycamore N."/>
            <person name="Barker D."/>
            <person name="Saunders D."/>
            <person name="Wallis J."/>
            <person name="Babbage A."/>
            <person name="Hammond S."/>
            <person name="Mashreghi-Mohammadi M."/>
            <person name="Barr L."/>
            <person name="Martin S."/>
            <person name="Wray P."/>
            <person name="Ellington A."/>
            <person name="Matthews N."/>
            <person name="Ellwood M."/>
            <person name="Woodmansey R."/>
            <person name="Clark G."/>
            <person name="Cooper J."/>
            <person name="Tromans A."/>
            <person name="Grafham D."/>
            <person name="Skuce C."/>
            <person name="Pandian R."/>
            <person name="Andrews R."/>
            <person name="Harrison E."/>
            <person name="Kimberley A."/>
            <person name="Garnett J."/>
            <person name="Fosker N."/>
            <person name="Hall R."/>
            <person name="Garner P."/>
            <person name="Kelly D."/>
            <person name="Bird C."/>
            <person name="Palmer S."/>
            <person name="Gehring I."/>
            <person name="Berger A."/>
            <person name="Dooley C.M."/>
            <person name="Ersan-Urun Z."/>
            <person name="Eser C."/>
            <person name="Geiger H."/>
            <person name="Geisler M."/>
            <person name="Karotki L."/>
            <person name="Kirn A."/>
            <person name="Konantz J."/>
            <person name="Konantz M."/>
            <person name="Oberlander M."/>
            <person name="Rudolph-Geiger S."/>
            <person name="Teucke M."/>
            <person name="Lanz C."/>
            <person name="Raddatz G."/>
            <person name="Osoegawa K."/>
            <person name="Zhu B."/>
            <person name="Rapp A."/>
            <person name="Widaa S."/>
            <person name="Langford C."/>
            <person name="Yang F."/>
            <person name="Schuster S.C."/>
            <person name="Carter N.P."/>
            <person name="Harrow J."/>
            <person name="Ning Z."/>
            <person name="Herrero J."/>
            <person name="Searle S.M."/>
            <person name="Enright A."/>
            <person name="Geisler R."/>
            <person name="Plasterk R.H."/>
            <person name="Lee C."/>
            <person name="Westerfield M."/>
            <person name="de Jong P.J."/>
            <person name="Zon L.I."/>
            <person name="Postlethwait J.H."/>
            <person name="Nusslein-Volhard C."/>
            <person name="Hubbard T.J."/>
            <person name="Roest Crollius H."/>
            <person name="Rogers J."/>
            <person name="Stemple D.L."/>
        </authorList>
    </citation>
    <scope>NUCLEOTIDE SEQUENCE [LARGE SCALE GENOMIC DNA]</scope>
    <source>
        <strain>Tuebingen</strain>
    </source>
</reference>
<reference key="2">
    <citation type="submission" date="2005-06" db="EMBL/GenBank/DDBJ databases">
        <authorList>
            <consortium name="NIH - Zebrafish Gene Collection (ZGC) project"/>
        </authorList>
    </citation>
    <scope>NUCLEOTIDE SEQUENCE [LARGE SCALE MRNA] (ISOFORMS 1 AND 3)</scope>
    <source>
        <tissue>Embryo</tissue>
    </source>
</reference>
<reference key="3">
    <citation type="journal article" date="2009" name="Hum. Mol. Genet.">
        <title>Variants of the elongator protein 3 (ELP3) gene are associated with motor neuron degeneration.</title>
        <authorList>
            <person name="Simpson C.L."/>
            <person name="Lemmens R."/>
            <person name="Miskiewicz K."/>
            <person name="Broom W.J."/>
            <person name="Hansen V.K."/>
            <person name="van Vught P.W."/>
            <person name="Landers J.E."/>
            <person name="Sapp P."/>
            <person name="Van Den Bosch L."/>
            <person name="Knight J."/>
            <person name="Neale B.M."/>
            <person name="Turner M.R."/>
            <person name="Veldink J.H."/>
            <person name="Ophoff R.A."/>
            <person name="Tripathi V.B."/>
            <person name="Beleza A."/>
            <person name="Shah M.N."/>
            <person name="Proitsi P."/>
            <person name="Van Hoecke A."/>
            <person name="Carmeliet P."/>
            <person name="Horvitz H.R."/>
            <person name="Leigh P.N."/>
            <person name="Shaw C.E."/>
            <person name="van den Berg L.H."/>
            <person name="Sham P.C."/>
            <person name="Powell J.F."/>
            <person name="Verstreken P."/>
            <person name="Brown R.H. Jr."/>
            <person name="Robberecht W."/>
            <person name="Al-Chalabi A."/>
        </authorList>
    </citation>
    <scope>FUNCTION</scope>
    <scope>DISRUPTION PHENOTYPE</scope>
</reference>
<reference key="4">
    <citation type="journal article" date="2020" name="Int. J. Mol. Sci.">
        <title>Elongator Subunit 3 (Elp3) Is Required for Zebrafish Trunk Development.</title>
        <authorList>
            <person name="Rojas-Benitez D."/>
            <person name="Allende M.L."/>
        </authorList>
    </citation>
    <scope>FUNCTION</scope>
    <scope>DISRUPTION PHENOTYPE</scope>
</reference>